<name>VPB_BPP2</name>
<dbReference type="EMBL" id="AF063097">
    <property type="protein sequence ID" value="AAD03301.1"/>
    <property type="molecule type" value="Genomic_DNA"/>
</dbReference>
<dbReference type="PIR" id="S07044">
    <property type="entry name" value="S07044"/>
</dbReference>
<dbReference type="RefSeq" id="NP_046790.1">
    <property type="nucleotide sequence ID" value="NC_001895.1"/>
</dbReference>
<dbReference type="DIP" id="DIP-16935N"/>
<dbReference type="GeneID" id="77440825"/>
<dbReference type="KEGG" id="vg:77440825"/>
<dbReference type="Proteomes" id="UP000009092">
    <property type="component" value="Genome"/>
</dbReference>
<dbReference type="GO" id="GO:0071897">
    <property type="term" value="P:DNA biosynthetic process"/>
    <property type="evidence" value="ECO:0007669"/>
    <property type="project" value="UniProtKB-KW"/>
</dbReference>
<dbReference type="GO" id="GO:0006260">
    <property type="term" value="P:DNA replication"/>
    <property type="evidence" value="ECO:0007669"/>
    <property type="project" value="UniProtKB-KW"/>
</dbReference>
<sequence length="166" mass="19887">MTVMTLNLVEKQPAAMRRIIGKHLAVPRWQDTCDYYNQMMERERLTVCFHAQLKQRHATMCFEEMNDVERERLVCAIDELRGAFSKRRQVGASEYAYISFLTVSQRRTLFMHAGLTEKEFNQPYWRINEESCYWRDALFRALRELFSLFEYAPTILTSVKPEQYLH</sequence>
<comment type="function">
    <text>Required for lagging strand synthesis. Might interact with the host dnaB protein.</text>
</comment>
<comment type="developmental stage">
    <text>Required continuously throughout the infection cycle.</text>
</comment>
<accession>P07696</accession>
<gene>
    <name type="primary">B</name>
</gene>
<protein>
    <recommendedName>
        <fullName>Replication gene B protein</fullName>
    </recommendedName>
    <alternativeName>
        <fullName>GpB</fullName>
    </alternativeName>
</protein>
<keyword id="KW-0235">DNA replication</keyword>
<keyword id="KW-0237">DNA synthesis</keyword>
<keyword id="KW-0244">Early protein</keyword>
<keyword id="KW-1185">Reference proteome</keyword>
<proteinExistence type="evidence at transcript level"/>
<reference key="1">
    <citation type="journal article" date="1987" name="Mol. Gen. Genet.">
        <title>DNA sequences of bacteriophage P2 early genes cox and B and their regulatory sites.</title>
        <authorList>
            <person name="Haggaard-Ljungquist E."/>
            <person name="Kockum K."/>
            <person name="Bertani L.E."/>
        </authorList>
    </citation>
    <scope>NUCLEOTIDE SEQUENCE [GENOMIC DNA]</scope>
</reference>
<organism>
    <name type="scientific">Escherichia phage P2</name>
    <name type="common">Bacteriophage P2</name>
    <dbReference type="NCBI Taxonomy" id="2905681"/>
    <lineage>
        <taxon>Viruses</taxon>
        <taxon>Duplodnaviria</taxon>
        <taxon>Heunggongvirae</taxon>
        <taxon>Uroviricota</taxon>
        <taxon>Caudoviricetes</taxon>
        <taxon>Peduoviridae</taxon>
        <taxon>Peduovirus</taxon>
        <taxon>Peduovirus P2</taxon>
    </lineage>
</organism>
<feature type="chain" id="PRO_0000165248" description="Replication gene B protein">
    <location>
        <begin position="1"/>
        <end position="166"/>
    </location>
</feature>
<organismHost>
    <name type="scientific">Enterobacteriaceae</name>
    <dbReference type="NCBI Taxonomy" id="543"/>
</organismHost>